<gene>
    <name evidence="1" type="primary">bioD</name>
    <name type="ordered locus">CKL_0937</name>
</gene>
<organism>
    <name type="scientific">Clostridium kluyveri (strain ATCC 8527 / DSM 555 / NBRC 12016 / NCIMB 10680 / K1)</name>
    <dbReference type="NCBI Taxonomy" id="431943"/>
    <lineage>
        <taxon>Bacteria</taxon>
        <taxon>Bacillati</taxon>
        <taxon>Bacillota</taxon>
        <taxon>Clostridia</taxon>
        <taxon>Eubacteriales</taxon>
        <taxon>Clostridiaceae</taxon>
        <taxon>Clostridium</taxon>
    </lineage>
</organism>
<name>BIOD_CLOK5</name>
<evidence type="ECO:0000255" key="1">
    <source>
        <dbReference type="HAMAP-Rule" id="MF_00336"/>
    </source>
</evidence>
<dbReference type="EC" id="6.3.3.3" evidence="1"/>
<dbReference type="EMBL" id="CP000673">
    <property type="protein sequence ID" value="EDK32988.1"/>
    <property type="molecule type" value="Genomic_DNA"/>
</dbReference>
<dbReference type="RefSeq" id="WP_012101317.1">
    <property type="nucleotide sequence ID" value="NC_009706.1"/>
</dbReference>
<dbReference type="SMR" id="A5N6Q7"/>
<dbReference type="STRING" id="431943.CKL_0937"/>
<dbReference type="KEGG" id="ckl:CKL_0937"/>
<dbReference type="eggNOG" id="COG0132">
    <property type="taxonomic scope" value="Bacteria"/>
</dbReference>
<dbReference type="HOGENOM" id="CLU_072551_3_0_9"/>
<dbReference type="UniPathway" id="UPA00078">
    <property type="reaction ID" value="UER00161"/>
</dbReference>
<dbReference type="Proteomes" id="UP000002411">
    <property type="component" value="Chromosome"/>
</dbReference>
<dbReference type="GO" id="GO:0005829">
    <property type="term" value="C:cytosol"/>
    <property type="evidence" value="ECO:0007669"/>
    <property type="project" value="TreeGrafter"/>
</dbReference>
<dbReference type="GO" id="GO:0005524">
    <property type="term" value="F:ATP binding"/>
    <property type="evidence" value="ECO:0007669"/>
    <property type="project" value="UniProtKB-UniRule"/>
</dbReference>
<dbReference type="GO" id="GO:0004141">
    <property type="term" value="F:dethiobiotin synthase activity"/>
    <property type="evidence" value="ECO:0007669"/>
    <property type="project" value="UniProtKB-UniRule"/>
</dbReference>
<dbReference type="GO" id="GO:0000287">
    <property type="term" value="F:magnesium ion binding"/>
    <property type="evidence" value="ECO:0007669"/>
    <property type="project" value="UniProtKB-UniRule"/>
</dbReference>
<dbReference type="GO" id="GO:0009102">
    <property type="term" value="P:biotin biosynthetic process"/>
    <property type="evidence" value="ECO:0007669"/>
    <property type="project" value="UniProtKB-UniRule"/>
</dbReference>
<dbReference type="CDD" id="cd03109">
    <property type="entry name" value="DTBS"/>
    <property type="match status" value="1"/>
</dbReference>
<dbReference type="FunFam" id="3.40.50.300:FF:000292">
    <property type="entry name" value="ATP-dependent dethiobiotin synthetase BioD"/>
    <property type="match status" value="1"/>
</dbReference>
<dbReference type="Gene3D" id="3.40.50.300">
    <property type="entry name" value="P-loop containing nucleotide triphosphate hydrolases"/>
    <property type="match status" value="1"/>
</dbReference>
<dbReference type="HAMAP" id="MF_00336">
    <property type="entry name" value="BioD"/>
    <property type="match status" value="1"/>
</dbReference>
<dbReference type="InterPro" id="IPR004472">
    <property type="entry name" value="DTB_synth_BioD"/>
</dbReference>
<dbReference type="InterPro" id="IPR027417">
    <property type="entry name" value="P-loop_NTPase"/>
</dbReference>
<dbReference type="NCBIfam" id="TIGR00347">
    <property type="entry name" value="bioD"/>
    <property type="match status" value="1"/>
</dbReference>
<dbReference type="PANTHER" id="PTHR43210:SF2">
    <property type="entry name" value="ATP-DEPENDENT DETHIOBIOTIN SYNTHETASE BIOD 2"/>
    <property type="match status" value="1"/>
</dbReference>
<dbReference type="PANTHER" id="PTHR43210">
    <property type="entry name" value="DETHIOBIOTIN SYNTHETASE"/>
    <property type="match status" value="1"/>
</dbReference>
<dbReference type="Pfam" id="PF13500">
    <property type="entry name" value="AAA_26"/>
    <property type="match status" value="1"/>
</dbReference>
<dbReference type="PIRSF" id="PIRSF006755">
    <property type="entry name" value="DTB_synth"/>
    <property type="match status" value="1"/>
</dbReference>
<dbReference type="SUPFAM" id="SSF52540">
    <property type="entry name" value="P-loop containing nucleoside triphosphate hydrolases"/>
    <property type="match status" value="1"/>
</dbReference>
<protein>
    <recommendedName>
        <fullName evidence="1">ATP-dependent dethiobiotin synthetase BioD</fullName>
        <ecNumber evidence="1">6.3.3.3</ecNumber>
    </recommendedName>
    <alternativeName>
        <fullName evidence="1">DTB synthetase</fullName>
        <shortName evidence="1">DTBS</shortName>
    </alternativeName>
    <alternativeName>
        <fullName evidence="1">Dethiobiotin synthase</fullName>
    </alternativeName>
</protein>
<keyword id="KW-0067">ATP-binding</keyword>
<keyword id="KW-0093">Biotin biosynthesis</keyword>
<keyword id="KW-0963">Cytoplasm</keyword>
<keyword id="KW-0436">Ligase</keyword>
<keyword id="KW-0460">Magnesium</keyword>
<keyword id="KW-0479">Metal-binding</keyword>
<keyword id="KW-0547">Nucleotide-binding</keyword>
<keyword id="KW-1185">Reference proteome</keyword>
<sequence length="241" mass="26750">MAKGIFIVGTDTDIGKTVVTAGLMHVLRSRGYNAVYFKAALSGALEIDNKLIPSDTKLVSDVSKLEEPYENITPYVYRTGVSPHLAARLENNPMDLDIVKEKYVYLKEKYDFIIAEGSGGIVCPLIDDGRGVYTIGNLIKDLNMSVIIVASAGLGTINHTVLTAKYIENLGIKIEGIIINKYEKDLFYDDNIGMIEKITKLPIVAKLKNIKDMNDNEIEAIRIHSEKAFSAENIIKHMEQL</sequence>
<feature type="chain" id="PRO_1000079272" description="ATP-dependent dethiobiotin synthetase BioD">
    <location>
        <begin position="1"/>
        <end position="241"/>
    </location>
</feature>
<feature type="active site" evidence="1">
    <location>
        <position position="38"/>
    </location>
</feature>
<feature type="binding site" evidence="1">
    <location>
        <begin position="13"/>
        <end position="18"/>
    </location>
    <ligand>
        <name>ATP</name>
        <dbReference type="ChEBI" id="CHEBI:30616"/>
    </ligand>
</feature>
<feature type="binding site" evidence="1">
    <location>
        <position position="17"/>
    </location>
    <ligand>
        <name>Mg(2+)</name>
        <dbReference type="ChEBI" id="CHEBI:18420"/>
    </ligand>
</feature>
<feature type="binding site" evidence="1">
    <location>
        <position position="42"/>
    </location>
    <ligand>
        <name>substrate</name>
    </ligand>
</feature>
<feature type="binding site" evidence="1">
    <location>
        <position position="55"/>
    </location>
    <ligand>
        <name>ATP</name>
        <dbReference type="ChEBI" id="CHEBI:30616"/>
    </ligand>
</feature>
<feature type="binding site" evidence="1">
    <location>
        <position position="55"/>
    </location>
    <ligand>
        <name>Mg(2+)</name>
        <dbReference type="ChEBI" id="CHEBI:18420"/>
    </ligand>
</feature>
<feature type="binding site" evidence="1">
    <location>
        <begin position="116"/>
        <end position="119"/>
    </location>
    <ligand>
        <name>ATP</name>
        <dbReference type="ChEBI" id="CHEBI:30616"/>
    </ligand>
</feature>
<feature type="binding site" evidence="1">
    <location>
        <position position="116"/>
    </location>
    <ligand>
        <name>Mg(2+)</name>
        <dbReference type="ChEBI" id="CHEBI:18420"/>
    </ligand>
</feature>
<feature type="binding site" evidence="1">
    <location>
        <begin position="180"/>
        <end position="181"/>
    </location>
    <ligand>
        <name>ATP</name>
        <dbReference type="ChEBI" id="CHEBI:30616"/>
    </ligand>
</feature>
<accession>A5N6Q7</accession>
<proteinExistence type="inferred from homology"/>
<reference key="1">
    <citation type="journal article" date="2008" name="Proc. Natl. Acad. Sci. U.S.A.">
        <title>The genome of Clostridium kluyveri, a strict anaerobe with unique metabolic features.</title>
        <authorList>
            <person name="Seedorf H."/>
            <person name="Fricke W.F."/>
            <person name="Veith B."/>
            <person name="Brueggemann H."/>
            <person name="Liesegang H."/>
            <person name="Strittmatter A."/>
            <person name="Miethke M."/>
            <person name="Buckel W."/>
            <person name="Hinderberger J."/>
            <person name="Li F."/>
            <person name="Hagemeier C."/>
            <person name="Thauer R.K."/>
            <person name="Gottschalk G."/>
        </authorList>
    </citation>
    <scope>NUCLEOTIDE SEQUENCE [LARGE SCALE GENOMIC DNA]</scope>
    <source>
        <strain>ATCC 8527 / DSM 555 / NBRC 12016 / NCIMB 10680 / K1</strain>
    </source>
</reference>
<comment type="function">
    <text evidence="1">Catalyzes a mechanistically unusual reaction, the ATP-dependent insertion of CO2 between the N7 and N8 nitrogen atoms of 7,8-diaminopelargonic acid (DAPA, also called 7,8-diammoniononanoate) to form a ureido ring.</text>
</comment>
<comment type="catalytic activity">
    <reaction evidence="1">
        <text>(7R,8S)-7,8-diammoniononanoate + CO2 + ATP = (4R,5S)-dethiobiotin + ADP + phosphate + 3 H(+)</text>
        <dbReference type="Rhea" id="RHEA:15805"/>
        <dbReference type="ChEBI" id="CHEBI:15378"/>
        <dbReference type="ChEBI" id="CHEBI:16526"/>
        <dbReference type="ChEBI" id="CHEBI:30616"/>
        <dbReference type="ChEBI" id="CHEBI:43474"/>
        <dbReference type="ChEBI" id="CHEBI:149469"/>
        <dbReference type="ChEBI" id="CHEBI:149473"/>
        <dbReference type="ChEBI" id="CHEBI:456216"/>
        <dbReference type="EC" id="6.3.3.3"/>
    </reaction>
</comment>
<comment type="cofactor">
    <cofactor evidence="1">
        <name>Mg(2+)</name>
        <dbReference type="ChEBI" id="CHEBI:18420"/>
    </cofactor>
</comment>
<comment type="pathway">
    <text evidence="1">Cofactor biosynthesis; biotin biosynthesis; biotin from 7,8-diaminononanoate: step 1/2.</text>
</comment>
<comment type="subunit">
    <text evidence="1">Homodimer.</text>
</comment>
<comment type="subcellular location">
    <subcellularLocation>
        <location evidence="1">Cytoplasm</location>
    </subcellularLocation>
</comment>
<comment type="similarity">
    <text evidence="1">Belongs to the dethiobiotin synthetase family.</text>
</comment>